<reference key="1">
    <citation type="journal article" date="2002" name="Nucleic Acids Res.">
        <title>Genome sequence of Shigella flexneri 2a: insights into pathogenicity through comparison with genomes of Escherichia coli K12 and O157.</title>
        <authorList>
            <person name="Jin Q."/>
            <person name="Yuan Z."/>
            <person name="Xu J."/>
            <person name="Wang Y."/>
            <person name="Shen Y."/>
            <person name="Lu W."/>
            <person name="Wang J."/>
            <person name="Liu H."/>
            <person name="Yang J."/>
            <person name="Yang F."/>
            <person name="Zhang X."/>
            <person name="Zhang J."/>
            <person name="Yang G."/>
            <person name="Wu H."/>
            <person name="Qu D."/>
            <person name="Dong J."/>
            <person name="Sun L."/>
            <person name="Xue Y."/>
            <person name="Zhao A."/>
            <person name="Gao Y."/>
            <person name="Zhu J."/>
            <person name="Kan B."/>
            <person name="Ding K."/>
            <person name="Chen S."/>
            <person name="Cheng H."/>
            <person name="Yao Z."/>
            <person name="He B."/>
            <person name="Chen R."/>
            <person name="Ma D."/>
            <person name="Qiang B."/>
            <person name="Wen Y."/>
            <person name="Hou Y."/>
            <person name="Yu J."/>
        </authorList>
    </citation>
    <scope>NUCLEOTIDE SEQUENCE [LARGE SCALE GENOMIC DNA]</scope>
    <source>
        <strain>301 / Serotype 2a</strain>
    </source>
</reference>
<reference key="2">
    <citation type="journal article" date="2003" name="Infect. Immun.">
        <title>Complete genome sequence and comparative genomics of Shigella flexneri serotype 2a strain 2457T.</title>
        <authorList>
            <person name="Wei J."/>
            <person name="Goldberg M.B."/>
            <person name="Burland V."/>
            <person name="Venkatesan M.M."/>
            <person name="Deng W."/>
            <person name="Fournier G."/>
            <person name="Mayhew G.F."/>
            <person name="Plunkett G. III"/>
            <person name="Rose D.J."/>
            <person name="Darling A."/>
            <person name="Mau B."/>
            <person name="Perna N.T."/>
            <person name="Payne S.M."/>
            <person name="Runyen-Janecky L.J."/>
            <person name="Zhou S."/>
            <person name="Schwartz D.C."/>
            <person name="Blattner F.R."/>
        </authorList>
    </citation>
    <scope>NUCLEOTIDE SEQUENCE [LARGE SCALE GENOMIC DNA]</scope>
    <source>
        <strain>ATCC 700930 / 2457T / Serotype 2a</strain>
    </source>
</reference>
<feature type="chain" id="PRO_0000350412" description="Dual-specificity RNA methyltransferase RlmN">
    <location>
        <begin position="1"/>
        <end position="384"/>
    </location>
</feature>
<feature type="domain" description="Radical SAM core" evidence="2">
    <location>
        <begin position="111"/>
        <end position="350"/>
    </location>
</feature>
<feature type="active site" description="Proton acceptor" evidence="1">
    <location>
        <position position="105"/>
    </location>
</feature>
<feature type="active site" description="S-methylcysteine intermediate" evidence="1">
    <location>
        <position position="355"/>
    </location>
</feature>
<feature type="binding site" evidence="1">
    <location>
        <position position="125"/>
    </location>
    <ligand>
        <name>[4Fe-4S] cluster</name>
        <dbReference type="ChEBI" id="CHEBI:49883"/>
        <note>4Fe-4S-S-AdoMet</note>
    </ligand>
</feature>
<feature type="binding site" evidence="1">
    <location>
        <position position="129"/>
    </location>
    <ligand>
        <name>[4Fe-4S] cluster</name>
        <dbReference type="ChEBI" id="CHEBI:49883"/>
        <note>4Fe-4S-S-AdoMet</note>
    </ligand>
</feature>
<feature type="binding site" evidence="1">
    <location>
        <position position="132"/>
    </location>
    <ligand>
        <name>[4Fe-4S] cluster</name>
        <dbReference type="ChEBI" id="CHEBI:49883"/>
        <note>4Fe-4S-S-AdoMet</note>
    </ligand>
</feature>
<feature type="binding site" evidence="1">
    <location>
        <begin position="179"/>
        <end position="180"/>
    </location>
    <ligand>
        <name>S-adenosyl-L-methionine</name>
        <dbReference type="ChEBI" id="CHEBI:59789"/>
    </ligand>
</feature>
<feature type="binding site" evidence="1">
    <location>
        <position position="211"/>
    </location>
    <ligand>
        <name>S-adenosyl-L-methionine</name>
        <dbReference type="ChEBI" id="CHEBI:59789"/>
    </ligand>
</feature>
<feature type="binding site" evidence="1">
    <location>
        <begin position="233"/>
        <end position="235"/>
    </location>
    <ligand>
        <name>S-adenosyl-L-methionine</name>
        <dbReference type="ChEBI" id="CHEBI:59789"/>
    </ligand>
</feature>
<feature type="binding site" evidence="1">
    <location>
        <position position="312"/>
    </location>
    <ligand>
        <name>S-adenosyl-L-methionine</name>
        <dbReference type="ChEBI" id="CHEBI:59789"/>
    </ligand>
</feature>
<feature type="disulfide bond" description="(transient)" evidence="1">
    <location>
        <begin position="118"/>
        <end position="355"/>
    </location>
</feature>
<organism>
    <name type="scientific">Shigella flexneri</name>
    <dbReference type="NCBI Taxonomy" id="623"/>
    <lineage>
        <taxon>Bacteria</taxon>
        <taxon>Pseudomonadati</taxon>
        <taxon>Pseudomonadota</taxon>
        <taxon>Gammaproteobacteria</taxon>
        <taxon>Enterobacterales</taxon>
        <taxon>Enterobacteriaceae</taxon>
        <taxon>Shigella</taxon>
    </lineage>
</organism>
<gene>
    <name evidence="1" type="primary">rlmN</name>
    <name type="ordered locus">SF2563</name>
    <name type="ordered locus">S2735</name>
</gene>
<name>RLMN_SHIFL</name>
<proteinExistence type="inferred from homology"/>
<accession>Q83K42</accession>
<accession>Q7C0G8</accession>
<evidence type="ECO:0000255" key="1">
    <source>
        <dbReference type="HAMAP-Rule" id="MF_01849"/>
    </source>
</evidence>
<evidence type="ECO:0000255" key="2">
    <source>
        <dbReference type="PROSITE-ProRule" id="PRU01266"/>
    </source>
</evidence>
<comment type="function">
    <text evidence="1">Specifically methylates position 2 of adenine 2503 in 23S rRNA and position 2 of adenine 37 in tRNAs. m2A2503 modification seems to play a crucial role in the proofreading step occurring at the peptidyl transferase center and thus would serve to optimize ribosomal fidelity.</text>
</comment>
<comment type="catalytic activity">
    <reaction evidence="1">
        <text>adenosine(2503) in 23S rRNA + 2 reduced [2Fe-2S]-[ferredoxin] + 2 S-adenosyl-L-methionine = 2-methyladenosine(2503) in 23S rRNA + 5'-deoxyadenosine + L-methionine + 2 oxidized [2Fe-2S]-[ferredoxin] + S-adenosyl-L-homocysteine</text>
        <dbReference type="Rhea" id="RHEA:42916"/>
        <dbReference type="Rhea" id="RHEA-COMP:10000"/>
        <dbReference type="Rhea" id="RHEA-COMP:10001"/>
        <dbReference type="Rhea" id="RHEA-COMP:10152"/>
        <dbReference type="Rhea" id="RHEA-COMP:10282"/>
        <dbReference type="ChEBI" id="CHEBI:17319"/>
        <dbReference type="ChEBI" id="CHEBI:33737"/>
        <dbReference type="ChEBI" id="CHEBI:33738"/>
        <dbReference type="ChEBI" id="CHEBI:57844"/>
        <dbReference type="ChEBI" id="CHEBI:57856"/>
        <dbReference type="ChEBI" id="CHEBI:59789"/>
        <dbReference type="ChEBI" id="CHEBI:74411"/>
        <dbReference type="ChEBI" id="CHEBI:74497"/>
        <dbReference type="EC" id="2.1.1.192"/>
    </reaction>
</comment>
<comment type="catalytic activity">
    <reaction evidence="1">
        <text>adenosine(37) in tRNA + 2 reduced [2Fe-2S]-[ferredoxin] + 2 S-adenosyl-L-methionine = 2-methyladenosine(37) in tRNA + 5'-deoxyadenosine + L-methionine + 2 oxidized [2Fe-2S]-[ferredoxin] + S-adenosyl-L-homocysteine</text>
        <dbReference type="Rhea" id="RHEA:43332"/>
        <dbReference type="Rhea" id="RHEA-COMP:10000"/>
        <dbReference type="Rhea" id="RHEA-COMP:10001"/>
        <dbReference type="Rhea" id="RHEA-COMP:10162"/>
        <dbReference type="Rhea" id="RHEA-COMP:10485"/>
        <dbReference type="ChEBI" id="CHEBI:17319"/>
        <dbReference type="ChEBI" id="CHEBI:33737"/>
        <dbReference type="ChEBI" id="CHEBI:33738"/>
        <dbReference type="ChEBI" id="CHEBI:57844"/>
        <dbReference type="ChEBI" id="CHEBI:57856"/>
        <dbReference type="ChEBI" id="CHEBI:59789"/>
        <dbReference type="ChEBI" id="CHEBI:74411"/>
        <dbReference type="ChEBI" id="CHEBI:74497"/>
        <dbReference type="EC" id="2.1.1.192"/>
    </reaction>
</comment>
<comment type="cofactor">
    <cofactor evidence="1">
        <name>[4Fe-4S] cluster</name>
        <dbReference type="ChEBI" id="CHEBI:49883"/>
    </cofactor>
    <text evidence="1">Binds 1 [4Fe-4S] cluster. The cluster is coordinated with 3 cysteines and an exchangeable S-adenosyl-L-methionine.</text>
</comment>
<comment type="subcellular location">
    <subcellularLocation>
        <location evidence="1">Cytoplasm</location>
    </subcellularLocation>
</comment>
<comment type="miscellaneous">
    <text evidence="1">Reaction proceeds by a ping-pong mechanism involving intermediate methylation of a conserved cysteine residue.</text>
</comment>
<comment type="similarity">
    <text evidence="1">Belongs to the radical SAM superfamily. RlmN family.</text>
</comment>
<protein>
    <recommendedName>
        <fullName evidence="1">Dual-specificity RNA methyltransferase RlmN</fullName>
        <ecNumber evidence="1">2.1.1.192</ecNumber>
    </recommendedName>
    <alternativeName>
        <fullName evidence="1">23S rRNA (adenine(2503)-C(2))-methyltransferase</fullName>
    </alternativeName>
    <alternativeName>
        <fullName evidence="1">23S rRNA m2A2503 methyltransferase</fullName>
    </alternativeName>
    <alternativeName>
        <fullName evidence="1">Ribosomal RNA large subunit methyltransferase N</fullName>
    </alternativeName>
    <alternativeName>
        <fullName evidence="1">tRNA (adenine(37)-C(2))-methyltransferase</fullName>
    </alternativeName>
    <alternativeName>
        <fullName evidence="1">tRNA m2A37 methyltransferase</fullName>
    </alternativeName>
</protein>
<sequence>MSEQLVTPENVTTKDGKINLLDLNRQQMREFFKDLGEKTFRADQVMKWMYHYCCDNFDEMTDINKVLRGKLKEVAEIRAPEVVEEQRSSDGTIKWAIAVGDQRVETVYIPEDDRATLCVSSQVGCALECKFCSTAQQGFNRNLRVSEIIGQVWRAAKIVGAAKVTGQRPITNVVMMGMGEPLLNLNNVVPAMEIMLDDFGFGLSKRRVTLSTSGVVPALDKLGDMIDVALAISLHAPNDEIRDEIVPINKKYNIETFLAAVRRYLEKSNANQGRVTIEYVMLDHVNDGTEHAHQLAELLKDTPCKINLIPWNPFPDAPYGRSSNSRIDRFSKVLMSYGFTTIVRKTRGDDIDAACGQLAGDVIDRTKRTLRKRMQGEAIDIKAV</sequence>
<dbReference type="EC" id="2.1.1.192" evidence="1"/>
<dbReference type="EMBL" id="AE005674">
    <property type="protein sequence ID" value="AAN44063.1"/>
    <property type="molecule type" value="Genomic_DNA"/>
</dbReference>
<dbReference type="EMBL" id="AE014073">
    <property type="protein sequence ID" value="AAP17890.1"/>
    <property type="molecule type" value="Genomic_DNA"/>
</dbReference>
<dbReference type="RefSeq" id="WP_000003328.1">
    <property type="nucleotide sequence ID" value="NZ_WPGW01000078.1"/>
</dbReference>
<dbReference type="SMR" id="Q83K42"/>
<dbReference type="STRING" id="198214.SF2563"/>
<dbReference type="PaxDb" id="198214-SF2563"/>
<dbReference type="KEGG" id="sfl:SF2563"/>
<dbReference type="KEGG" id="sfx:S2735"/>
<dbReference type="PATRIC" id="fig|198214.7.peg.3061"/>
<dbReference type="HOGENOM" id="CLU_029101_0_0_6"/>
<dbReference type="Proteomes" id="UP000001006">
    <property type="component" value="Chromosome"/>
</dbReference>
<dbReference type="Proteomes" id="UP000002673">
    <property type="component" value="Chromosome"/>
</dbReference>
<dbReference type="GO" id="GO:0005737">
    <property type="term" value="C:cytoplasm"/>
    <property type="evidence" value="ECO:0007669"/>
    <property type="project" value="UniProtKB-SubCell"/>
</dbReference>
<dbReference type="GO" id="GO:0051539">
    <property type="term" value="F:4 iron, 4 sulfur cluster binding"/>
    <property type="evidence" value="ECO:0007669"/>
    <property type="project" value="UniProtKB-UniRule"/>
</dbReference>
<dbReference type="GO" id="GO:0046872">
    <property type="term" value="F:metal ion binding"/>
    <property type="evidence" value="ECO:0007669"/>
    <property type="project" value="UniProtKB-KW"/>
</dbReference>
<dbReference type="GO" id="GO:0070040">
    <property type="term" value="F:rRNA (adenine(2503)-C2-)-methyltransferase activity"/>
    <property type="evidence" value="ECO:0007669"/>
    <property type="project" value="UniProtKB-UniRule"/>
</dbReference>
<dbReference type="GO" id="GO:0019843">
    <property type="term" value="F:rRNA binding"/>
    <property type="evidence" value="ECO:0007669"/>
    <property type="project" value="UniProtKB-UniRule"/>
</dbReference>
<dbReference type="GO" id="GO:0002935">
    <property type="term" value="F:tRNA (adenine(37)-C2)-methyltransferase activity"/>
    <property type="evidence" value="ECO:0007669"/>
    <property type="project" value="UniProtKB-UniRule"/>
</dbReference>
<dbReference type="GO" id="GO:0000049">
    <property type="term" value="F:tRNA binding"/>
    <property type="evidence" value="ECO:0007669"/>
    <property type="project" value="UniProtKB-UniRule"/>
</dbReference>
<dbReference type="GO" id="GO:0070475">
    <property type="term" value="P:rRNA base methylation"/>
    <property type="evidence" value="ECO:0007669"/>
    <property type="project" value="UniProtKB-UniRule"/>
</dbReference>
<dbReference type="GO" id="GO:0030488">
    <property type="term" value="P:tRNA methylation"/>
    <property type="evidence" value="ECO:0007669"/>
    <property type="project" value="UniProtKB-UniRule"/>
</dbReference>
<dbReference type="CDD" id="cd01335">
    <property type="entry name" value="Radical_SAM"/>
    <property type="match status" value="1"/>
</dbReference>
<dbReference type="FunFam" id="1.10.150.530:FF:000001">
    <property type="entry name" value="Dual-specificity RNA methyltransferase RlmN"/>
    <property type="match status" value="1"/>
</dbReference>
<dbReference type="FunFam" id="3.20.20.70:FF:000008">
    <property type="entry name" value="Dual-specificity RNA methyltransferase RlmN"/>
    <property type="match status" value="1"/>
</dbReference>
<dbReference type="Gene3D" id="1.10.150.530">
    <property type="match status" value="1"/>
</dbReference>
<dbReference type="Gene3D" id="3.20.20.70">
    <property type="entry name" value="Aldolase class I"/>
    <property type="match status" value="1"/>
</dbReference>
<dbReference type="HAMAP" id="MF_01849">
    <property type="entry name" value="RNA_methyltr_RlmN"/>
    <property type="match status" value="1"/>
</dbReference>
<dbReference type="InterPro" id="IPR013785">
    <property type="entry name" value="Aldolase_TIM"/>
</dbReference>
<dbReference type="InterPro" id="IPR040072">
    <property type="entry name" value="Methyltransferase_A"/>
</dbReference>
<dbReference type="InterPro" id="IPR048641">
    <property type="entry name" value="RlmN_N"/>
</dbReference>
<dbReference type="InterPro" id="IPR027492">
    <property type="entry name" value="RNA_MTrfase_RlmN"/>
</dbReference>
<dbReference type="InterPro" id="IPR004383">
    <property type="entry name" value="rRNA_lsu_MTrfase_RlmN/Cfr"/>
</dbReference>
<dbReference type="InterPro" id="IPR007197">
    <property type="entry name" value="rSAM"/>
</dbReference>
<dbReference type="NCBIfam" id="NF008396">
    <property type="entry name" value="PRK11194.1"/>
    <property type="match status" value="1"/>
</dbReference>
<dbReference type="NCBIfam" id="TIGR00048">
    <property type="entry name" value="rRNA_mod_RlmN"/>
    <property type="match status" value="1"/>
</dbReference>
<dbReference type="PANTHER" id="PTHR30544">
    <property type="entry name" value="23S RRNA METHYLTRANSFERASE"/>
    <property type="match status" value="1"/>
</dbReference>
<dbReference type="PANTHER" id="PTHR30544:SF5">
    <property type="entry name" value="RADICAL SAM CORE DOMAIN-CONTAINING PROTEIN"/>
    <property type="match status" value="1"/>
</dbReference>
<dbReference type="Pfam" id="PF04055">
    <property type="entry name" value="Radical_SAM"/>
    <property type="match status" value="1"/>
</dbReference>
<dbReference type="Pfam" id="PF21016">
    <property type="entry name" value="RlmN_N"/>
    <property type="match status" value="1"/>
</dbReference>
<dbReference type="PIRSF" id="PIRSF006004">
    <property type="entry name" value="CHP00048"/>
    <property type="match status" value="1"/>
</dbReference>
<dbReference type="SFLD" id="SFLDF00275">
    <property type="entry name" value="adenosine_C2_methyltransferase"/>
    <property type="match status" value="1"/>
</dbReference>
<dbReference type="SFLD" id="SFLDS00029">
    <property type="entry name" value="Radical_SAM"/>
    <property type="match status" value="1"/>
</dbReference>
<dbReference type="SUPFAM" id="SSF102114">
    <property type="entry name" value="Radical SAM enzymes"/>
    <property type="match status" value="1"/>
</dbReference>
<dbReference type="PROSITE" id="PS51918">
    <property type="entry name" value="RADICAL_SAM"/>
    <property type="match status" value="1"/>
</dbReference>
<keyword id="KW-0004">4Fe-4S</keyword>
<keyword id="KW-0963">Cytoplasm</keyword>
<keyword id="KW-1015">Disulfide bond</keyword>
<keyword id="KW-0408">Iron</keyword>
<keyword id="KW-0411">Iron-sulfur</keyword>
<keyword id="KW-0479">Metal-binding</keyword>
<keyword id="KW-0489">Methyltransferase</keyword>
<keyword id="KW-1185">Reference proteome</keyword>
<keyword id="KW-0698">rRNA processing</keyword>
<keyword id="KW-0949">S-adenosyl-L-methionine</keyword>
<keyword id="KW-0808">Transferase</keyword>
<keyword id="KW-0819">tRNA processing</keyword>